<keyword id="KW-0007">Acetylation</keyword>
<keyword id="KW-0349">Heme</keyword>
<keyword id="KW-0408">Iron</keyword>
<keyword id="KW-0479">Metal-binding</keyword>
<keyword id="KW-0561">Oxygen transport</keyword>
<keyword id="KW-0597">Phosphoprotein</keyword>
<keyword id="KW-0813">Transport</keyword>
<proteinExistence type="evidence at transcript level"/>
<feature type="chain" id="PRO_0000052618" description="Hemoglobin subunit alpha">
    <location>
        <begin position="1"/>
        <end position="142"/>
    </location>
</feature>
<feature type="peptide" id="PRO_0000455865" description="Hemopressin" evidence="2">
    <location>
        <begin position="96"/>
        <end position="104"/>
    </location>
</feature>
<feature type="domain" description="Globin" evidence="4">
    <location>
        <begin position="2"/>
        <end position="142"/>
    </location>
</feature>
<feature type="binding site" evidence="4">
    <location>
        <position position="59"/>
    </location>
    <ligand>
        <name>O2</name>
        <dbReference type="ChEBI" id="CHEBI:15379"/>
    </ligand>
</feature>
<feature type="binding site" description="proximal binding residue" evidence="4">
    <location>
        <position position="88"/>
    </location>
    <ligand>
        <name>heme b</name>
        <dbReference type="ChEBI" id="CHEBI:60344"/>
    </ligand>
    <ligandPart>
        <name>Fe</name>
        <dbReference type="ChEBI" id="CHEBI:18248"/>
    </ligandPart>
</feature>
<feature type="modified residue" description="Phosphoserine" evidence="3">
    <location>
        <position position="4"/>
    </location>
</feature>
<feature type="modified residue" description="N6-succinyllysine" evidence="1">
    <location>
        <position position="8"/>
    </location>
</feature>
<feature type="modified residue" description="Phosphothreonine" evidence="3">
    <location>
        <position position="9"/>
    </location>
</feature>
<feature type="modified residue" description="N6-succinyllysine" evidence="1">
    <location>
        <position position="12"/>
    </location>
</feature>
<feature type="modified residue" description="N6-acetyllysine; alternate" evidence="3">
    <location>
        <position position="17"/>
    </location>
</feature>
<feature type="modified residue" description="N6-succinyllysine; alternate" evidence="1">
    <location>
        <position position="17"/>
    </location>
</feature>
<feature type="modified residue" description="Phosphotyrosine" evidence="3">
    <location>
        <position position="25"/>
    </location>
</feature>
<feature type="modified residue" description="Phosphoserine" evidence="3">
    <location>
        <position position="36"/>
    </location>
</feature>
<feature type="modified residue" description="N6-succinyllysine" evidence="1">
    <location>
        <position position="41"/>
    </location>
</feature>
<feature type="modified residue" description="Phosphoserine" evidence="3">
    <location>
        <position position="50"/>
    </location>
</feature>
<feature type="modified residue" description="Phosphoserine" evidence="1">
    <location>
        <position position="103"/>
    </location>
</feature>
<feature type="modified residue" description="Phosphothreonine" evidence="1">
    <location>
        <position position="109"/>
    </location>
</feature>
<feature type="modified residue" description="Phosphoserine" evidence="1">
    <location>
        <position position="125"/>
    </location>
</feature>
<feature type="modified residue" description="Phosphoserine" evidence="1">
    <location>
        <position position="132"/>
    </location>
</feature>
<feature type="modified residue" description="Phosphothreonine" evidence="1">
    <location>
        <position position="135"/>
    </location>
</feature>
<feature type="modified residue" description="Phosphothreonine" evidence="1">
    <location>
        <position position="138"/>
    </location>
</feature>
<feature type="modified residue" description="Phosphoserine" evidence="1">
    <location>
        <position position="139"/>
    </location>
</feature>
<protein>
    <recommendedName>
        <fullName>Hemoglobin subunit alpha</fullName>
    </recommendedName>
    <alternativeName>
        <fullName>Alpha-globin</fullName>
    </alternativeName>
    <alternativeName>
        <fullName>Hemoglobin alpha chain</fullName>
    </alternativeName>
    <component>
        <recommendedName>
            <fullName evidence="2">Hemopressin</fullName>
        </recommendedName>
    </component>
</protein>
<reference key="1">
    <citation type="journal article" date="1985" name="Proc. Natl. Acad. Sci. U.S.A.">
        <title>Cloning and chromosomal location of the alpha- and beta-globin genes from a marsupial.</title>
        <authorList>
            <person name="Wainwright B."/>
            <person name="Hope R."/>
        </authorList>
    </citation>
    <scope>NUCLEOTIDE SEQUENCE [MRNA]</scope>
</reference>
<dbReference type="EMBL" id="M14567">
    <property type="protein sequence ID" value="AAA30825.1"/>
    <property type="molecule type" value="mRNA"/>
</dbReference>
<dbReference type="PIR" id="A23571">
    <property type="entry name" value="A23571"/>
</dbReference>
<dbReference type="SMR" id="P07419"/>
<dbReference type="GO" id="GO:0072562">
    <property type="term" value="C:blood microparticle"/>
    <property type="evidence" value="ECO:0007669"/>
    <property type="project" value="TreeGrafter"/>
</dbReference>
<dbReference type="GO" id="GO:0031838">
    <property type="term" value="C:haptoglobin-hemoglobin complex"/>
    <property type="evidence" value="ECO:0007669"/>
    <property type="project" value="TreeGrafter"/>
</dbReference>
<dbReference type="GO" id="GO:0005833">
    <property type="term" value="C:hemoglobin complex"/>
    <property type="evidence" value="ECO:0007669"/>
    <property type="project" value="InterPro"/>
</dbReference>
<dbReference type="GO" id="GO:0031720">
    <property type="term" value="F:haptoglobin binding"/>
    <property type="evidence" value="ECO:0007669"/>
    <property type="project" value="TreeGrafter"/>
</dbReference>
<dbReference type="GO" id="GO:0020037">
    <property type="term" value="F:heme binding"/>
    <property type="evidence" value="ECO:0007669"/>
    <property type="project" value="InterPro"/>
</dbReference>
<dbReference type="GO" id="GO:0005506">
    <property type="term" value="F:iron ion binding"/>
    <property type="evidence" value="ECO:0007669"/>
    <property type="project" value="InterPro"/>
</dbReference>
<dbReference type="GO" id="GO:0043177">
    <property type="term" value="F:organic acid binding"/>
    <property type="evidence" value="ECO:0007669"/>
    <property type="project" value="TreeGrafter"/>
</dbReference>
<dbReference type="GO" id="GO:0019825">
    <property type="term" value="F:oxygen binding"/>
    <property type="evidence" value="ECO:0007669"/>
    <property type="project" value="InterPro"/>
</dbReference>
<dbReference type="GO" id="GO:0005344">
    <property type="term" value="F:oxygen carrier activity"/>
    <property type="evidence" value="ECO:0007669"/>
    <property type="project" value="UniProtKB-KW"/>
</dbReference>
<dbReference type="GO" id="GO:0004601">
    <property type="term" value="F:peroxidase activity"/>
    <property type="evidence" value="ECO:0007669"/>
    <property type="project" value="TreeGrafter"/>
</dbReference>
<dbReference type="GO" id="GO:0042744">
    <property type="term" value="P:hydrogen peroxide catabolic process"/>
    <property type="evidence" value="ECO:0007669"/>
    <property type="project" value="TreeGrafter"/>
</dbReference>
<dbReference type="CDD" id="cd08927">
    <property type="entry name" value="Hb-alpha-like"/>
    <property type="match status" value="1"/>
</dbReference>
<dbReference type="FunFam" id="1.10.490.10:FF:000002">
    <property type="entry name" value="Hemoglobin subunit alpha"/>
    <property type="match status" value="1"/>
</dbReference>
<dbReference type="Gene3D" id="1.10.490.10">
    <property type="entry name" value="Globins"/>
    <property type="match status" value="1"/>
</dbReference>
<dbReference type="InterPro" id="IPR000971">
    <property type="entry name" value="Globin"/>
</dbReference>
<dbReference type="InterPro" id="IPR009050">
    <property type="entry name" value="Globin-like_sf"/>
</dbReference>
<dbReference type="InterPro" id="IPR012292">
    <property type="entry name" value="Globin/Proto"/>
</dbReference>
<dbReference type="InterPro" id="IPR002338">
    <property type="entry name" value="Hemoglobin_a-typ"/>
</dbReference>
<dbReference type="InterPro" id="IPR050056">
    <property type="entry name" value="Hemoglobin_oxygen_transport"/>
</dbReference>
<dbReference type="InterPro" id="IPR002339">
    <property type="entry name" value="Hemoglobin_pi"/>
</dbReference>
<dbReference type="PANTHER" id="PTHR11442">
    <property type="entry name" value="HEMOGLOBIN FAMILY MEMBER"/>
    <property type="match status" value="1"/>
</dbReference>
<dbReference type="PANTHER" id="PTHR11442:SF48">
    <property type="entry name" value="HEMOGLOBIN SUBUNIT ALPHA"/>
    <property type="match status" value="1"/>
</dbReference>
<dbReference type="Pfam" id="PF00042">
    <property type="entry name" value="Globin"/>
    <property type="match status" value="1"/>
</dbReference>
<dbReference type="PRINTS" id="PR00612">
    <property type="entry name" value="ALPHAHAEM"/>
</dbReference>
<dbReference type="PRINTS" id="PR00815">
    <property type="entry name" value="PIHAEM"/>
</dbReference>
<dbReference type="SUPFAM" id="SSF46458">
    <property type="entry name" value="Globin-like"/>
    <property type="match status" value="1"/>
</dbReference>
<dbReference type="PROSITE" id="PS01033">
    <property type="entry name" value="GLOBIN"/>
    <property type="match status" value="1"/>
</dbReference>
<comment type="function">
    <text>Involved in oxygen transport from the lung to the various peripheral tissues.</text>
</comment>
<comment type="function">
    <molecule>Hemopressin</molecule>
    <text evidence="2">Hemopressin acts as an antagonist peptide of the cannabinoid receptor CNR1. Hemopressin-binding efficiently blocks cannabinoid receptor CNR1 and subsequent signaling.</text>
</comment>
<comment type="subunit">
    <text>Heterotetramer of two alpha chains and two beta chains.</text>
</comment>
<comment type="tissue specificity">
    <text>Red blood cells.</text>
</comment>
<comment type="similarity">
    <text evidence="4">Belongs to the globin family.</text>
</comment>
<gene>
    <name type="primary">HBA</name>
</gene>
<sequence>MVLSDADKTHVKAIWGKVGGHAGAYAAEALARTFLSFPTTKTYFPHFDLSPGSAQIQGHGKKVADALSQAVAHLDDLPGTLSKLSDLHAHKLRVDPVNFKLLSHCLIVTLAAHLSKDLTPEVHASMDKFFASVATVLTSKYR</sequence>
<organism>
    <name type="scientific">Dasyurus viverrinus</name>
    <name type="common">Eastern quoll</name>
    <name type="synonym">Didelphis viverrina</name>
    <dbReference type="NCBI Taxonomy" id="9279"/>
    <lineage>
        <taxon>Eukaryota</taxon>
        <taxon>Metazoa</taxon>
        <taxon>Chordata</taxon>
        <taxon>Craniata</taxon>
        <taxon>Vertebrata</taxon>
        <taxon>Euteleostomi</taxon>
        <taxon>Mammalia</taxon>
        <taxon>Metatheria</taxon>
        <taxon>Dasyuromorphia</taxon>
        <taxon>Dasyuridae</taxon>
        <taxon>Dasyurus</taxon>
    </lineage>
</organism>
<accession>P07419</accession>
<name>HBA_DASVI</name>
<evidence type="ECO:0000250" key="1">
    <source>
        <dbReference type="UniProtKB" id="P01942"/>
    </source>
</evidence>
<evidence type="ECO:0000250" key="2">
    <source>
        <dbReference type="UniProtKB" id="P01946"/>
    </source>
</evidence>
<evidence type="ECO:0000250" key="3">
    <source>
        <dbReference type="UniProtKB" id="P69905"/>
    </source>
</evidence>
<evidence type="ECO:0000255" key="4">
    <source>
        <dbReference type="PROSITE-ProRule" id="PRU00238"/>
    </source>
</evidence>